<evidence type="ECO:0000250" key="1"/>
<evidence type="ECO:0000305" key="2"/>
<organism>
    <name type="scientific">Buchnera aphidicola subsp. Acyrthosiphon pisum (strain APS)</name>
    <name type="common">Acyrthosiphon pisum symbiotic bacterium</name>
    <dbReference type="NCBI Taxonomy" id="107806"/>
    <lineage>
        <taxon>Bacteria</taxon>
        <taxon>Pseudomonadati</taxon>
        <taxon>Pseudomonadota</taxon>
        <taxon>Gammaproteobacteria</taxon>
        <taxon>Enterobacterales</taxon>
        <taxon>Erwiniaceae</taxon>
        <taxon>Buchnera</taxon>
    </lineage>
</organism>
<keyword id="KW-0627">Porphyrin biosynthesis</keyword>
<keyword id="KW-1185">Reference proteome</keyword>
<keyword id="KW-0808">Transferase</keyword>
<gene>
    <name type="primary">hemC</name>
    <name type="ordered locus">BU591</name>
</gene>
<name>HEM3_BUCAI</name>
<comment type="function">
    <text evidence="1">Tetrapolymerization of the monopyrrole PBG into the hydroxymethylbilane pre-uroporphyrinogen in several discrete steps.</text>
</comment>
<comment type="catalytic activity">
    <reaction>
        <text>4 porphobilinogen + H2O = hydroxymethylbilane + 4 NH4(+)</text>
        <dbReference type="Rhea" id="RHEA:13185"/>
        <dbReference type="ChEBI" id="CHEBI:15377"/>
        <dbReference type="ChEBI" id="CHEBI:28938"/>
        <dbReference type="ChEBI" id="CHEBI:57845"/>
        <dbReference type="ChEBI" id="CHEBI:58126"/>
        <dbReference type="EC" id="2.5.1.61"/>
    </reaction>
</comment>
<comment type="cofactor">
    <cofactor evidence="1">
        <name>dipyrromethane</name>
        <dbReference type="ChEBI" id="CHEBI:60342"/>
    </cofactor>
    <text evidence="1">Binds 1 dipyrromethane group covalently.</text>
</comment>
<comment type="pathway">
    <text>Porphyrin-containing compound metabolism; protoporphyrin-IX biosynthesis; coproporphyrinogen-III from 5-aminolevulinate: step 2/4.</text>
</comment>
<comment type="subunit">
    <text evidence="1">Monomer.</text>
</comment>
<comment type="miscellaneous">
    <text evidence="1">The porphobilinogen subunits are added to the dipyrromethane group.</text>
</comment>
<comment type="similarity">
    <text evidence="2">Belongs to the HMBS family.</text>
</comment>
<dbReference type="EC" id="2.5.1.61"/>
<dbReference type="EMBL" id="BA000003">
    <property type="protein sequence ID" value="BAB13280.1"/>
    <property type="molecule type" value="Genomic_DNA"/>
</dbReference>
<dbReference type="RefSeq" id="NP_240394.1">
    <property type="nucleotide sequence ID" value="NC_002528.1"/>
</dbReference>
<dbReference type="RefSeq" id="WP_009874541.1">
    <property type="nucleotide sequence ID" value="NZ_AP036055.1"/>
</dbReference>
<dbReference type="SMR" id="P57651"/>
<dbReference type="STRING" id="563178.BUAP5A_584"/>
<dbReference type="EnsemblBacteria" id="BAB13280">
    <property type="protein sequence ID" value="BAB13280"/>
    <property type="gene ID" value="BAB13280"/>
</dbReference>
<dbReference type="KEGG" id="buc:BU591"/>
<dbReference type="PATRIC" id="fig|107806.10.peg.596"/>
<dbReference type="eggNOG" id="COG0181">
    <property type="taxonomic scope" value="Bacteria"/>
</dbReference>
<dbReference type="HOGENOM" id="CLU_019704_0_2_6"/>
<dbReference type="UniPathway" id="UPA00251">
    <property type="reaction ID" value="UER00319"/>
</dbReference>
<dbReference type="Proteomes" id="UP000001806">
    <property type="component" value="Chromosome"/>
</dbReference>
<dbReference type="GO" id="GO:0005737">
    <property type="term" value="C:cytoplasm"/>
    <property type="evidence" value="ECO:0007669"/>
    <property type="project" value="TreeGrafter"/>
</dbReference>
<dbReference type="GO" id="GO:0004418">
    <property type="term" value="F:hydroxymethylbilane synthase activity"/>
    <property type="evidence" value="ECO:0007669"/>
    <property type="project" value="UniProtKB-UniRule"/>
</dbReference>
<dbReference type="GO" id="GO:0006782">
    <property type="term" value="P:protoporphyrinogen IX biosynthetic process"/>
    <property type="evidence" value="ECO:0007669"/>
    <property type="project" value="UniProtKB-UniRule"/>
</dbReference>
<dbReference type="CDD" id="cd13646">
    <property type="entry name" value="PBP2_EcHMBS_like"/>
    <property type="match status" value="1"/>
</dbReference>
<dbReference type="FunFam" id="3.30.160.40:FF:000002">
    <property type="entry name" value="Porphobilinogen deaminase"/>
    <property type="match status" value="1"/>
</dbReference>
<dbReference type="FunFam" id="3.40.190.10:FF:000004">
    <property type="entry name" value="Porphobilinogen deaminase"/>
    <property type="match status" value="1"/>
</dbReference>
<dbReference type="FunFam" id="3.40.190.10:FF:000005">
    <property type="entry name" value="Porphobilinogen deaminase"/>
    <property type="match status" value="1"/>
</dbReference>
<dbReference type="Gene3D" id="3.40.190.10">
    <property type="entry name" value="Periplasmic binding protein-like II"/>
    <property type="match status" value="2"/>
</dbReference>
<dbReference type="Gene3D" id="3.30.160.40">
    <property type="entry name" value="Porphobilinogen deaminase, C-terminal domain"/>
    <property type="match status" value="1"/>
</dbReference>
<dbReference type="HAMAP" id="MF_00260">
    <property type="entry name" value="Porphobil_deam"/>
    <property type="match status" value="1"/>
</dbReference>
<dbReference type="InterPro" id="IPR000860">
    <property type="entry name" value="HemC"/>
</dbReference>
<dbReference type="InterPro" id="IPR022419">
    <property type="entry name" value="Porphobilin_deaminase_cofac_BS"/>
</dbReference>
<dbReference type="InterPro" id="IPR022417">
    <property type="entry name" value="Porphobilin_deaminase_N"/>
</dbReference>
<dbReference type="InterPro" id="IPR022418">
    <property type="entry name" value="Porphobilinogen_deaminase_C"/>
</dbReference>
<dbReference type="InterPro" id="IPR036803">
    <property type="entry name" value="Porphobilinogen_deaminase_C_sf"/>
</dbReference>
<dbReference type="NCBIfam" id="TIGR00212">
    <property type="entry name" value="hemC"/>
    <property type="match status" value="1"/>
</dbReference>
<dbReference type="PANTHER" id="PTHR11557">
    <property type="entry name" value="PORPHOBILINOGEN DEAMINASE"/>
    <property type="match status" value="1"/>
</dbReference>
<dbReference type="PANTHER" id="PTHR11557:SF0">
    <property type="entry name" value="PORPHOBILINOGEN DEAMINASE"/>
    <property type="match status" value="1"/>
</dbReference>
<dbReference type="Pfam" id="PF01379">
    <property type="entry name" value="Porphobil_deam"/>
    <property type="match status" value="1"/>
</dbReference>
<dbReference type="Pfam" id="PF03900">
    <property type="entry name" value="Porphobil_deamC"/>
    <property type="match status" value="1"/>
</dbReference>
<dbReference type="PIRSF" id="PIRSF001438">
    <property type="entry name" value="4pyrrol_synth_OHMeBilane_synth"/>
    <property type="match status" value="1"/>
</dbReference>
<dbReference type="PRINTS" id="PR00151">
    <property type="entry name" value="PORPHBDMNASE"/>
</dbReference>
<dbReference type="SUPFAM" id="SSF53850">
    <property type="entry name" value="Periplasmic binding protein-like II"/>
    <property type="match status" value="1"/>
</dbReference>
<dbReference type="SUPFAM" id="SSF54782">
    <property type="entry name" value="Porphobilinogen deaminase (hydroxymethylbilane synthase), C-terminal domain"/>
    <property type="match status" value="1"/>
</dbReference>
<dbReference type="PROSITE" id="PS00533">
    <property type="entry name" value="PORPHOBILINOGEN_DEAM"/>
    <property type="match status" value="1"/>
</dbReference>
<sequence>MYNKTLRIATRKSPLALKQTKYVQKKILSLYPDLNIKLVPIVTHGDNILNKSLSKIGGKGLFIKELELALLENKADIAIHSMKDLPVKITKELCLVSICKRGNALDSLVSNNYQSINQLPKGAIVGTSSLRRQCQLITYRPDLIISPLRGNIETRIAKLDQGKYDAIILATEGLNRLRLKNRITQIIPAELSLPSCGQGAIGIQSRLHDKKVLFFLSRLNHINTFIEINAERAFCRKLESGCQIPIGSYAILKKNKIWLRGLVGSPNGKIILKGERIGCYNTGEKMGYSLADELLKNGAKNILNNLHIKQSYCI</sequence>
<accession>P57651</accession>
<reference key="1">
    <citation type="journal article" date="2000" name="Nature">
        <title>Genome sequence of the endocellular bacterial symbiont of aphids Buchnera sp. APS.</title>
        <authorList>
            <person name="Shigenobu S."/>
            <person name="Watanabe H."/>
            <person name="Hattori M."/>
            <person name="Sakaki Y."/>
            <person name="Ishikawa H."/>
        </authorList>
    </citation>
    <scope>NUCLEOTIDE SEQUENCE [LARGE SCALE GENOMIC DNA]</scope>
    <source>
        <strain>APS</strain>
    </source>
</reference>
<protein>
    <recommendedName>
        <fullName>Porphobilinogen deaminase</fullName>
        <shortName>PBG</shortName>
        <ecNumber>2.5.1.61</ecNumber>
    </recommendedName>
    <alternativeName>
        <fullName>Hydroxymethylbilane synthase</fullName>
        <shortName>HMBS</shortName>
    </alternativeName>
    <alternativeName>
        <fullName>Pre-uroporphyrinogen synthase</fullName>
    </alternativeName>
</protein>
<proteinExistence type="inferred from homology"/>
<feature type="chain" id="PRO_0000142916" description="Porphobilinogen deaminase">
    <location>
        <begin position="1"/>
        <end position="314"/>
    </location>
</feature>
<feature type="modified residue" description="S-(dipyrrolylmethanemethyl)cysteine" evidence="1">
    <location>
        <position position="242"/>
    </location>
</feature>